<keyword id="KW-0963">Cytoplasm</keyword>
<keyword id="KW-0460">Magnesium</keyword>
<keyword id="KW-0479">Metal-binding</keyword>
<keyword id="KW-0566">Pantothenate biosynthesis</keyword>
<keyword id="KW-1185">Reference proteome</keyword>
<keyword id="KW-0808">Transferase</keyword>
<proteinExistence type="inferred from homology"/>
<gene>
    <name evidence="1" type="primary">panB</name>
    <name type="ordered locus">Noca_2042</name>
</gene>
<sequence>MTSGRAMSPEETAPYGTGPARAESAPDAPAPIKRIRTHHLREMKQRGEKFAMLTAYEQYAAQTFDEAGIEVLLVGDSASNNVFANETSLPVTVDELIPLARAVSRSVRRALVVADLPFGSYQASPEQAYLTAVRFMKEANAHAVKLEGGIEMAPQVRKLTEGGIPVMAHIGFTPQSEHNLGGYRVQGRGEAAARVVAEAVAMEQAGAFAVVMEMVPGDVAAEVTKSVSIPTIGIGAGLDCDGQVLVWQDAFGLRTGRMPRFVKQYADLHGVLLQAARDYAADVKAGTFPGPEHTF</sequence>
<dbReference type="EC" id="2.1.2.11" evidence="1"/>
<dbReference type="EMBL" id="CP000509">
    <property type="protein sequence ID" value="ABL81551.1"/>
    <property type="molecule type" value="Genomic_DNA"/>
</dbReference>
<dbReference type="RefSeq" id="WP_011755497.1">
    <property type="nucleotide sequence ID" value="NC_008699.1"/>
</dbReference>
<dbReference type="SMR" id="A1SIB6"/>
<dbReference type="STRING" id="196162.Noca_2042"/>
<dbReference type="KEGG" id="nca:Noca_2042"/>
<dbReference type="eggNOG" id="COG0413">
    <property type="taxonomic scope" value="Bacteria"/>
</dbReference>
<dbReference type="HOGENOM" id="CLU_036645_1_0_11"/>
<dbReference type="OrthoDB" id="9781789at2"/>
<dbReference type="UniPathway" id="UPA00028">
    <property type="reaction ID" value="UER00003"/>
</dbReference>
<dbReference type="Proteomes" id="UP000000640">
    <property type="component" value="Chromosome"/>
</dbReference>
<dbReference type="GO" id="GO:0005737">
    <property type="term" value="C:cytoplasm"/>
    <property type="evidence" value="ECO:0007669"/>
    <property type="project" value="UniProtKB-SubCell"/>
</dbReference>
<dbReference type="GO" id="GO:0003864">
    <property type="term" value="F:3-methyl-2-oxobutanoate hydroxymethyltransferase activity"/>
    <property type="evidence" value="ECO:0007669"/>
    <property type="project" value="UniProtKB-UniRule"/>
</dbReference>
<dbReference type="GO" id="GO:0000287">
    <property type="term" value="F:magnesium ion binding"/>
    <property type="evidence" value="ECO:0007669"/>
    <property type="project" value="TreeGrafter"/>
</dbReference>
<dbReference type="GO" id="GO:0015940">
    <property type="term" value="P:pantothenate biosynthetic process"/>
    <property type="evidence" value="ECO:0007669"/>
    <property type="project" value="UniProtKB-UniRule"/>
</dbReference>
<dbReference type="CDD" id="cd06557">
    <property type="entry name" value="KPHMT-like"/>
    <property type="match status" value="1"/>
</dbReference>
<dbReference type="FunFam" id="3.20.20.60:FF:000003">
    <property type="entry name" value="3-methyl-2-oxobutanoate hydroxymethyltransferase"/>
    <property type="match status" value="1"/>
</dbReference>
<dbReference type="Gene3D" id="3.20.20.60">
    <property type="entry name" value="Phosphoenolpyruvate-binding domains"/>
    <property type="match status" value="1"/>
</dbReference>
<dbReference type="HAMAP" id="MF_00156">
    <property type="entry name" value="PanB"/>
    <property type="match status" value="1"/>
</dbReference>
<dbReference type="InterPro" id="IPR003700">
    <property type="entry name" value="Pantoate_hydroxy_MeTrfase"/>
</dbReference>
<dbReference type="InterPro" id="IPR015813">
    <property type="entry name" value="Pyrv/PenolPyrv_kinase-like_dom"/>
</dbReference>
<dbReference type="InterPro" id="IPR040442">
    <property type="entry name" value="Pyrv_kinase-like_dom_sf"/>
</dbReference>
<dbReference type="NCBIfam" id="TIGR00222">
    <property type="entry name" value="panB"/>
    <property type="match status" value="1"/>
</dbReference>
<dbReference type="NCBIfam" id="NF001452">
    <property type="entry name" value="PRK00311.1"/>
    <property type="match status" value="1"/>
</dbReference>
<dbReference type="PANTHER" id="PTHR20881">
    <property type="entry name" value="3-METHYL-2-OXOBUTANOATE HYDROXYMETHYLTRANSFERASE"/>
    <property type="match status" value="1"/>
</dbReference>
<dbReference type="PANTHER" id="PTHR20881:SF0">
    <property type="entry name" value="3-METHYL-2-OXOBUTANOATE HYDROXYMETHYLTRANSFERASE"/>
    <property type="match status" value="1"/>
</dbReference>
<dbReference type="Pfam" id="PF02548">
    <property type="entry name" value="Pantoate_transf"/>
    <property type="match status" value="1"/>
</dbReference>
<dbReference type="PIRSF" id="PIRSF000388">
    <property type="entry name" value="Pantoate_hydroxy_MeTrfase"/>
    <property type="match status" value="1"/>
</dbReference>
<dbReference type="SUPFAM" id="SSF51621">
    <property type="entry name" value="Phosphoenolpyruvate/pyruvate domain"/>
    <property type="match status" value="1"/>
</dbReference>
<name>PANB_NOCSJ</name>
<reference key="1">
    <citation type="submission" date="2006-12" db="EMBL/GenBank/DDBJ databases">
        <title>Complete sequence of chromosome 1 of Nocardioides sp. JS614.</title>
        <authorList>
            <person name="Copeland A."/>
            <person name="Lucas S."/>
            <person name="Lapidus A."/>
            <person name="Barry K."/>
            <person name="Detter J.C."/>
            <person name="Glavina del Rio T."/>
            <person name="Hammon N."/>
            <person name="Israni S."/>
            <person name="Dalin E."/>
            <person name="Tice H."/>
            <person name="Pitluck S."/>
            <person name="Thompson L.S."/>
            <person name="Brettin T."/>
            <person name="Bruce D."/>
            <person name="Han C."/>
            <person name="Tapia R."/>
            <person name="Schmutz J."/>
            <person name="Larimer F."/>
            <person name="Land M."/>
            <person name="Hauser L."/>
            <person name="Kyrpides N."/>
            <person name="Kim E."/>
            <person name="Mattes T."/>
            <person name="Gossett J."/>
            <person name="Richardson P."/>
        </authorList>
    </citation>
    <scope>NUCLEOTIDE SEQUENCE [LARGE SCALE GENOMIC DNA]</scope>
    <source>
        <strain>ATCC BAA-499 / JS614</strain>
    </source>
</reference>
<feature type="chain" id="PRO_0000297312" description="3-methyl-2-oxobutanoate hydroxymethyltransferase">
    <location>
        <begin position="1"/>
        <end position="295"/>
    </location>
</feature>
<feature type="region of interest" description="Disordered" evidence="2">
    <location>
        <begin position="1"/>
        <end position="30"/>
    </location>
</feature>
<feature type="active site" description="Proton acceptor" evidence="1">
    <location>
        <position position="213"/>
    </location>
</feature>
<feature type="binding site" evidence="1">
    <location>
        <begin position="76"/>
        <end position="77"/>
    </location>
    <ligand>
        <name>3-methyl-2-oxobutanoate</name>
        <dbReference type="ChEBI" id="CHEBI:11851"/>
    </ligand>
</feature>
<feature type="binding site" evidence="1">
    <location>
        <position position="76"/>
    </location>
    <ligand>
        <name>Mg(2+)</name>
        <dbReference type="ChEBI" id="CHEBI:18420"/>
    </ligand>
</feature>
<feature type="binding site" evidence="1">
    <location>
        <position position="115"/>
    </location>
    <ligand>
        <name>3-methyl-2-oxobutanoate</name>
        <dbReference type="ChEBI" id="CHEBI:11851"/>
    </ligand>
</feature>
<feature type="binding site" evidence="1">
    <location>
        <position position="115"/>
    </location>
    <ligand>
        <name>Mg(2+)</name>
        <dbReference type="ChEBI" id="CHEBI:18420"/>
    </ligand>
</feature>
<feature type="binding site" evidence="1">
    <location>
        <position position="145"/>
    </location>
    <ligand>
        <name>3-methyl-2-oxobutanoate</name>
        <dbReference type="ChEBI" id="CHEBI:11851"/>
    </ligand>
</feature>
<feature type="binding site" evidence="1">
    <location>
        <position position="147"/>
    </location>
    <ligand>
        <name>Mg(2+)</name>
        <dbReference type="ChEBI" id="CHEBI:18420"/>
    </ligand>
</feature>
<accession>A1SIB6</accession>
<protein>
    <recommendedName>
        <fullName evidence="1">3-methyl-2-oxobutanoate hydroxymethyltransferase</fullName>
        <ecNumber evidence="1">2.1.2.11</ecNumber>
    </recommendedName>
    <alternativeName>
        <fullName evidence="1">Ketopantoate hydroxymethyltransferase</fullName>
        <shortName evidence="1">KPHMT</shortName>
    </alternativeName>
</protein>
<evidence type="ECO:0000255" key="1">
    <source>
        <dbReference type="HAMAP-Rule" id="MF_00156"/>
    </source>
</evidence>
<evidence type="ECO:0000256" key="2">
    <source>
        <dbReference type="SAM" id="MobiDB-lite"/>
    </source>
</evidence>
<comment type="function">
    <text evidence="1">Catalyzes the reversible reaction in which hydroxymethyl group from 5,10-methylenetetrahydrofolate is transferred onto alpha-ketoisovalerate to form ketopantoate.</text>
</comment>
<comment type="catalytic activity">
    <reaction evidence="1">
        <text>3-methyl-2-oxobutanoate + (6R)-5,10-methylene-5,6,7,8-tetrahydrofolate + H2O = 2-dehydropantoate + (6S)-5,6,7,8-tetrahydrofolate</text>
        <dbReference type="Rhea" id="RHEA:11824"/>
        <dbReference type="ChEBI" id="CHEBI:11561"/>
        <dbReference type="ChEBI" id="CHEBI:11851"/>
        <dbReference type="ChEBI" id="CHEBI:15377"/>
        <dbReference type="ChEBI" id="CHEBI:15636"/>
        <dbReference type="ChEBI" id="CHEBI:57453"/>
        <dbReference type="EC" id="2.1.2.11"/>
    </reaction>
</comment>
<comment type="cofactor">
    <cofactor evidence="1">
        <name>Mg(2+)</name>
        <dbReference type="ChEBI" id="CHEBI:18420"/>
    </cofactor>
    <text evidence="1">Binds 1 Mg(2+) ion per subunit.</text>
</comment>
<comment type="pathway">
    <text evidence="1">Cofactor biosynthesis; (R)-pantothenate biosynthesis; (R)-pantoate from 3-methyl-2-oxobutanoate: step 1/2.</text>
</comment>
<comment type="subunit">
    <text evidence="1">Homodecamer; pentamer of dimers.</text>
</comment>
<comment type="subcellular location">
    <subcellularLocation>
        <location evidence="1">Cytoplasm</location>
    </subcellularLocation>
</comment>
<comment type="similarity">
    <text evidence="1">Belongs to the PanB family.</text>
</comment>
<organism>
    <name type="scientific">Nocardioides sp. (strain ATCC BAA-499 / JS614)</name>
    <dbReference type="NCBI Taxonomy" id="196162"/>
    <lineage>
        <taxon>Bacteria</taxon>
        <taxon>Bacillati</taxon>
        <taxon>Actinomycetota</taxon>
        <taxon>Actinomycetes</taxon>
        <taxon>Propionibacteriales</taxon>
        <taxon>Nocardioidaceae</taxon>
        <taxon>Nocardioides</taxon>
    </lineage>
</organism>